<dbReference type="EC" id="2.3.2.27" evidence="7"/>
<dbReference type="EMBL" id="U90439">
    <property type="protein sequence ID" value="AAB63545.1"/>
    <property type="molecule type" value="Genomic_DNA"/>
</dbReference>
<dbReference type="EMBL" id="CP002685">
    <property type="protein sequence ID" value="AEC10058.1"/>
    <property type="molecule type" value="Genomic_DNA"/>
</dbReference>
<dbReference type="PIR" id="E84848">
    <property type="entry name" value="E84848"/>
</dbReference>
<dbReference type="RefSeq" id="NP_181729.1">
    <property type="nucleotide sequence ID" value="NM_129762.6"/>
</dbReference>
<dbReference type="SMR" id="P93748"/>
<dbReference type="FunCoup" id="P93748">
    <property type="interactions" value="1125"/>
</dbReference>
<dbReference type="STRING" id="3702.P93748"/>
<dbReference type="iPTMnet" id="P93748"/>
<dbReference type="PaxDb" id="3702-AT2G41980.1"/>
<dbReference type="ProteomicsDB" id="234567"/>
<dbReference type="EnsemblPlants" id="AT2G41980.1">
    <property type="protein sequence ID" value="AT2G41980.1"/>
    <property type="gene ID" value="AT2G41980"/>
</dbReference>
<dbReference type="GeneID" id="818798"/>
<dbReference type="Gramene" id="AT2G41980.1">
    <property type="protein sequence ID" value="AT2G41980.1"/>
    <property type="gene ID" value="AT2G41980"/>
</dbReference>
<dbReference type="KEGG" id="ath:AT2G41980"/>
<dbReference type="Araport" id="AT2G41980"/>
<dbReference type="TAIR" id="AT2G41980">
    <property type="gene designation" value="SINAT1"/>
</dbReference>
<dbReference type="eggNOG" id="KOG3002">
    <property type="taxonomic scope" value="Eukaryota"/>
</dbReference>
<dbReference type="HOGENOM" id="CLU_028215_1_1_1"/>
<dbReference type="InParanoid" id="P93748"/>
<dbReference type="OMA" id="IFTYHTR"/>
<dbReference type="OrthoDB" id="941555at2759"/>
<dbReference type="PhylomeDB" id="P93748"/>
<dbReference type="UniPathway" id="UPA00143"/>
<dbReference type="PRO" id="PR:P93748"/>
<dbReference type="Proteomes" id="UP000006548">
    <property type="component" value="Chromosome 2"/>
</dbReference>
<dbReference type="ExpressionAtlas" id="P93748">
    <property type="expression patterns" value="baseline and differential"/>
</dbReference>
<dbReference type="GO" id="GO:0005776">
    <property type="term" value="C:autophagosome"/>
    <property type="evidence" value="ECO:0007669"/>
    <property type="project" value="UniProtKB-SubCell"/>
</dbReference>
<dbReference type="GO" id="GO:0005771">
    <property type="term" value="C:multivesicular body"/>
    <property type="evidence" value="ECO:0007669"/>
    <property type="project" value="UniProtKB-SubCell"/>
</dbReference>
<dbReference type="GO" id="GO:0016740">
    <property type="term" value="F:transferase activity"/>
    <property type="evidence" value="ECO:0007669"/>
    <property type="project" value="UniProtKB-KW"/>
</dbReference>
<dbReference type="GO" id="GO:0008270">
    <property type="term" value="F:zinc ion binding"/>
    <property type="evidence" value="ECO:0007669"/>
    <property type="project" value="UniProtKB-KW"/>
</dbReference>
<dbReference type="GO" id="GO:0016567">
    <property type="term" value="P:protein ubiquitination"/>
    <property type="evidence" value="ECO:0000314"/>
    <property type="project" value="UniProtKB"/>
</dbReference>
<dbReference type="GO" id="GO:2000785">
    <property type="term" value="P:regulation of autophagosome assembly"/>
    <property type="evidence" value="ECO:0000315"/>
    <property type="project" value="UniProtKB"/>
</dbReference>
<dbReference type="GO" id="GO:0006511">
    <property type="term" value="P:ubiquitin-dependent protein catabolic process"/>
    <property type="evidence" value="ECO:0007669"/>
    <property type="project" value="InterPro"/>
</dbReference>
<dbReference type="CDD" id="cd16571">
    <property type="entry name" value="RING-HC_SIAHs"/>
    <property type="match status" value="1"/>
</dbReference>
<dbReference type="CDD" id="cd03829">
    <property type="entry name" value="Sina"/>
    <property type="match status" value="1"/>
</dbReference>
<dbReference type="FunFam" id="3.30.40.10:FF:000041">
    <property type="entry name" value="E3 ubiquitin-protein ligase SINAT3"/>
    <property type="match status" value="1"/>
</dbReference>
<dbReference type="FunFam" id="2.60.210.10:FF:000004">
    <property type="entry name" value="E3 ubiquitin-protein ligase SINAT5-like"/>
    <property type="match status" value="1"/>
</dbReference>
<dbReference type="FunFam" id="3.30.40.10:FF:000311">
    <property type="entry name" value="E3 ubiquitin-protein ligase SINAT5-like"/>
    <property type="match status" value="1"/>
</dbReference>
<dbReference type="Gene3D" id="2.60.210.10">
    <property type="entry name" value="Apoptosis, Tumor Necrosis Factor Receptor Associated Protein 2, Chain A"/>
    <property type="match status" value="1"/>
</dbReference>
<dbReference type="Gene3D" id="3.30.40.10">
    <property type="entry name" value="Zinc/RING finger domain, C3HC4 (zinc finger)"/>
    <property type="match status" value="2"/>
</dbReference>
<dbReference type="InterPro" id="IPR018121">
    <property type="entry name" value="7-in-absentia-prot_TRAF-dom"/>
</dbReference>
<dbReference type="InterPro" id="IPR052088">
    <property type="entry name" value="E3_ubiquitin-ligase_SINA"/>
</dbReference>
<dbReference type="InterPro" id="IPR049548">
    <property type="entry name" value="Sina-like_RING"/>
</dbReference>
<dbReference type="InterPro" id="IPR008974">
    <property type="entry name" value="TRAF-like"/>
</dbReference>
<dbReference type="InterPro" id="IPR001841">
    <property type="entry name" value="Znf_RING"/>
</dbReference>
<dbReference type="InterPro" id="IPR013083">
    <property type="entry name" value="Znf_RING/FYVE/PHD"/>
</dbReference>
<dbReference type="InterPro" id="IPR013010">
    <property type="entry name" value="Znf_SIAH"/>
</dbReference>
<dbReference type="PANTHER" id="PTHR10315">
    <property type="entry name" value="E3 UBIQUITIN PROTEIN LIGASE SIAH"/>
    <property type="match status" value="1"/>
</dbReference>
<dbReference type="PANTHER" id="PTHR10315:SF168">
    <property type="entry name" value="E3 UBIQUITIN-PROTEIN LIGASE SINAT1-RELATED"/>
    <property type="match status" value="1"/>
</dbReference>
<dbReference type="Pfam" id="PF21362">
    <property type="entry name" value="Sina_RING"/>
    <property type="match status" value="1"/>
</dbReference>
<dbReference type="Pfam" id="PF03145">
    <property type="entry name" value="Sina_TRAF"/>
    <property type="match status" value="1"/>
</dbReference>
<dbReference type="Pfam" id="PF21361">
    <property type="entry name" value="Sina_ZnF"/>
    <property type="match status" value="1"/>
</dbReference>
<dbReference type="SUPFAM" id="SSF57850">
    <property type="entry name" value="RING/U-box"/>
    <property type="match status" value="1"/>
</dbReference>
<dbReference type="SUPFAM" id="SSF49599">
    <property type="entry name" value="TRAF domain-like"/>
    <property type="match status" value="1"/>
</dbReference>
<dbReference type="PROSITE" id="PS50089">
    <property type="entry name" value="ZF_RING_2"/>
    <property type="match status" value="1"/>
</dbReference>
<dbReference type="PROSITE" id="PS51081">
    <property type="entry name" value="ZF_SIAH"/>
    <property type="match status" value="1"/>
</dbReference>
<keyword id="KW-0968">Cytoplasmic vesicle</keyword>
<keyword id="KW-0967">Endosome</keyword>
<keyword id="KW-0479">Metal-binding</keyword>
<keyword id="KW-1185">Reference proteome</keyword>
<keyword id="KW-0808">Transferase</keyword>
<keyword id="KW-0833">Ubl conjugation pathway</keyword>
<keyword id="KW-0862">Zinc</keyword>
<keyword id="KW-0863">Zinc-finger</keyword>
<protein>
    <recommendedName>
        <fullName evidence="11">Putative E3 ubiquitin-protein ligase SINAT1</fullName>
        <ecNumber evidence="7">2.3.2.27</ecNumber>
    </recommendedName>
    <alternativeName>
        <fullName evidence="11">RING-type E3 ubiquitin transferase SINAT1</fullName>
    </alternativeName>
    <alternativeName>
        <fullName evidence="11">Seven in absentia homolog 1</fullName>
    </alternativeName>
</protein>
<gene>
    <name evidence="10" type="primary">SINAT1</name>
    <name type="ordered locus">At2g41980</name>
    <name type="ORF">T6D20.13</name>
</gene>
<reference key="1">
    <citation type="journal article" date="1999" name="Nature">
        <title>Sequence and analysis of chromosome 2 of the plant Arabidopsis thaliana.</title>
        <authorList>
            <person name="Lin X."/>
            <person name="Kaul S."/>
            <person name="Rounsley S.D."/>
            <person name="Shea T.P."/>
            <person name="Benito M.-I."/>
            <person name="Town C.D."/>
            <person name="Fujii C.Y."/>
            <person name="Mason T.M."/>
            <person name="Bowman C.L."/>
            <person name="Barnstead M.E."/>
            <person name="Feldblyum T.V."/>
            <person name="Buell C.R."/>
            <person name="Ketchum K.A."/>
            <person name="Lee J.J."/>
            <person name="Ronning C.M."/>
            <person name="Koo H.L."/>
            <person name="Moffat K.S."/>
            <person name="Cronin L.A."/>
            <person name="Shen M."/>
            <person name="Pai G."/>
            <person name="Van Aken S."/>
            <person name="Umayam L."/>
            <person name="Tallon L.J."/>
            <person name="Gill J.E."/>
            <person name="Adams M.D."/>
            <person name="Carrera A.J."/>
            <person name="Creasy T.H."/>
            <person name="Goodman H.M."/>
            <person name="Somerville C.R."/>
            <person name="Copenhaver G.P."/>
            <person name="Preuss D."/>
            <person name="Nierman W.C."/>
            <person name="White O."/>
            <person name="Eisen J.A."/>
            <person name="Salzberg S.L."/>
            <person name="Fraser C.M."/>
            <person name="Venter J.C."/>
        </authorList>
    </citation>
    <scope>NUCLEOTIDE SEQUENCE [LARGE SCALE GENOMIC DNA]</scope>
    <source>
        <strain>cv. Columbia</strain>
    </source>
</reference>
<reference key="2">
    <citation type="journal article" date="2017" name="Plant J.">
        <title>Araport11: a complete reannotation of the Arabidopsis thaliana reference genome.</title>
        <authorList>
            <person name="Cheng C.Y."/>
            <person name="Krishnakumar V."/>
            <person name="Chan A.P."/>
            <person name="Thibaud-Nissen F."/>
            <person name="Schobel S."/>
            <person name="Town C.D."/>
        </authorList>
    </citation>
    <scope>GENOME REANNOTATION</scope>
    <source>
        <strain>cv. Columbia</strain>
    </source>
</reference>
<reference key="3">
    <citation type="journal article" date="2012" name="Plant J.">
        <title>The wavy growth 3 E3 ligase family controls the gravitropic response in Arabidopsis roots.</title>
        <authorList>
            <person name="Sakai T."/>
            <person name="Mochizuki S."/>
            <person name="Haga K."/>
            <person name="Uehara Y."/>
            <person name="Suzuki A."/>
            <person name="Harada A."/>
            <person name="Wada T."/>
            <person name="Ishiguro S."/>
            <person name="Okada K."/>
        </authorList>
    </citation>
    <scope>INTERACTION WITH WAV3</scope>
    <source>
        <strain>cv. Landsberg erecta</strain>
    </source>
</reference>
<reference key="4">
    <citation type="journal article" date="2014" name="New Phytol.">
        <title>The tumor necrosis factor receptor-associated factor (TRAF)-like family protein SEVEN IN ABSENTIA 2 (SINA2) promotes drought tolerance in an ABA-dependent manner in Arabidopsis.</title>
        <authorList>
            <person name="Bao Y."/>
            <person name="Wang C."/>
            <person name="Jiang C."/>
            <person name="Pan J."/>
            <person name="Zhang G."/>
            <person name="Liu H."/>
            <person name="Zhang H."/>
        </authorList>
    </citation>
    <scope>INTERACTION WITH SINAT6</scope>
</reference>
<reference key="5">
    <citation type="journal article" date="2017" name="Plant Cell">
        <title>TRAF family proteins regulate autophagy dynamics by modulating AUTOPHAGY PROTEIN6 stability in Arabidopsis.</title>
        <authorList>
            <person name="Qi H."/>
            <person name="Xia F.N."/>
            <person name="Xie L.J."/>
            <person name="Yu L.J."/>
            <person name="Chen Q.F."/>
            <person name="Zhuang X.H."/>
            <person name="Wang Q."/>
            <person name="Li F."/>
            <person name="Jiang L."/>
            <person name="Xie Q."/>
            <person name="Xiao S."/>
        </authorList>
    </citation>
    <scope>FUNCTION</scope>
    <scope>CATALYTIC ACTIVITY</scope>
    <scope>INTERACTION WITH ATG6 AND TRAF1A</scope>
</reference>
<reference key="6">
    <citation type="journal article" date="2020" name="J. Integr. Plant Biol.">
        <title>SINAT E3 ligases regulate the stability of the ESCRT component FREE1 in response to iron deficiency in plants.</title>
        <authorList>
            <person name="Xiao Z."/>
            <person name="Yang C."/>
            <person name="Liu C."/>
            <person name="Yang L."/>
            <person name="Yang S."/>
            <person name="Zhou J."/>
            <person name="Li F."/>
            <person name="Jiang L."/>
            <person name="Xiao S."/>
            <person name="Gao C."/>
            <person name="Shen W."/>
        </authorList>
    </citation>
    <scope>FUNCTION</scope>
    <scope>INTERACTION WITH FREE1</scope>
    <scope>SUBCELLULAR LOCATION</scope>
    <scope>MUTAGENESIS OF HIS-75</scope>
</reference>
<reference key="7">
    <citation type="journal article" date="2020" name="Plant Cell">
        <title>SINAT E3 ubiquitin ligases mediate FREE1 and VPS23A degradation to modulate abscisic acid signaling.</title>
        <authorList>
            <person name="Xia F.N."/>
            <person name="Zeng B."/>
            <person name="Liu H.S."/>
            <person name="Qi H."/>
            <person name="Xie L.J."/>
            <person name="Yu L.J."/>
            <person name="Chen Q.F."/>
            <person name="Li J.F."/>
            <person name="Chen Y.Q."/>
            <person name="Jiang L."/>
            <person name="Xiao S."/>
        </authorList>
    </citation>
    <scope>FUNCTION</scope>
    <scope>INTERACTION WITH FREE1 AND ELC/VPS23A</scope>
    <scope>SUBCELLULAR LOCATION</scope>
</reference>
<proteinExistence type="evidence at protein level"/>
<name>SINA1_ARATH</name>
<comment type="function">
    <text evidence="7 8 9">E3 ubiquitin-protein ligase that mediates ubiquitination and subsequent proteasomal degradation of target proteins (PubMed:28351989, PubMed:32786047). E3 ubiquitin ligases accept ubiquitin from an E2 ubiquitin-conjugating enzyme in the form of a thioester and then directly transfers the ubiquitin to targeted substrates (PubMed:28351989, PubMed:32786047). It probably triggers the ubiquitin-mediated degradation of different substrates (PubMed:28351989, PubMed:32786047). Mediates the proteasomal-dependent degradation of ATG6, a component of the autophagosome complex (PubMed:28351989). Requires TRAF1A/MUSE14 and TRAF1B/MUSE13 to target ATG6 for ubiquitination and subsequent regulation of autophagosome assembly (PubMed:28351989). Modulates directly the ubiquitination and proteasomal-dependent degradation of FREE1, a component of the ESCRT-I complex (PubMed:32753431, PubMed:32786047). Modulates directly the ubiquitination and proteasomal-dependent degradation of ELC/VPS23A, a component of the ESCRT-I complex (PubMed:32753431).</text>
</comment>
<comment type="catalytic activity">
    <reaction evidence="7">
        <text>S-ubiquitinyl-[E2 ubiquitin-conjugating enzyme]-L-cysteine + [acceptor protein]-L-lysine = [E2 ubiquitin-conjugating enzyme]-L-cysteine + N(6)-ubiquitinyl-[acceptor protein]-L-lysine.</text>
        <dbReference type="EC" id="2.3.2.27"/>
    </reaction>
</comment>
<comment type="pathway">
    <text evidence="11">Protein modification; protein ubiquitination.</text>
</comment>
<comment type="subunit">
    <text evidence="5 6 7 8 9">Interacts with SINAT6 (PubMed:24350984). Interacts with ATG6 and TRAF1A (PubMed:28351989). Interacts with WAV3 (PubMed:22122664). Interacts with FREE1 (PubMed:32753431, PubMed:32786047). Interacts with ELC/VPS23A (PubMed:32753431).</text>
</comment>
<comment type="subcellular location">
    <subcellularLocation>
        <location evidence="8 9">Endosome</location>
        <location evidence="8 9">Multivesicular body</location>
    </subcellularLocation>
    <subcellularLocation>
        <location evidence="8">Cytoplasmic vesicle</location>
        <location evidence="8">Autophagosome</location>
    </subcellularLocation>
</comment>
<comment type="domain">
    <text evidence="2">The RING-type zinc finger domain is essential for ubiquitin ligase activity.</text>
</comment>
<comment type="domain">
    <text evidence="2">The SBD domain (substrate-binding domain) mediates the homodimerization and the interaction with substrate proteins. It is related to the TRAF family.</text>
</comment>
<comment type="similarity">
    <text evidence="11">Belongs to the SINA (Seven in absentia) family.</text>
</comment>
<sequence length="305" mass="34557">MAPGGSALKEALESNSTGVDYEVKMAKVEANSKPTKSGSGSIGKFHSSNGVYELLECPVCTNLMYPPIHQCPNGHTLCSSCKLRVQNTCPTCRYELGNIRCLALEKVAESLEVPCRYQNLGCQDIFPYYSKLKHEQHCRFRSYSCPYAGSECSVTGDIPTLVDHLKDDHKVDMHDGCTFNHRYVKSNPHEVENATWMLTVFNCFGRQFCLHFEAFQLGMAPVYMAFLRFMGDENEAKKFSYSLEVGAHSRKLTWQGIPRSIRDSHRKVRDSQDGLIIPRNLALYFSGSDKEELKLRVTGRIWKEE</sequence>
<accession>P93748</accession>
<organism>
    <name type="scientific">Arabidopsis thaliana</name>
    <name type="common">Mouse-ear cress</name>
    <dbReference type="NCBI Taxonomy" id="3702"/>
    <lineage>
        <taxon>Eukaryota</taxon>
        <taxon>Viridiplantae</taxon>
        <taxon>Streptophyta</taxon>
        <taxon>Embryophyta</taxon>
        <taxon>Tracheophyta</taxon>
        <taxon>Spermatophyta</taxon>
        <taxon>Magnoliopsida</taxon>
        <taxon>eudicotyledons</taxon>
        <taxon>Gunneridae</taxon>
        <taxon>Pentapetalae</taxon>
        <taxon>rosids</taxon>
        <taxon>malvids</taxon>
        <taxon>Brassicales</taxon>
        <taxon>Brassicaceae</taxon>
        <taxon>Camelineae</taxon>
        <taxon>Arabidopsis</taxon>
    </lineage>
</organism>
<evidence type="ECO:0000250" key="1"/>
<evidence type="ECO:0000250" key="2">
    <source>
        <dbReference type="UniProtKB" id="Q8IUQ4"/>
    </source>
</evidence>
<evidence type="ECO:0000255" key="3">
    <source>
        <dbReference type="PROSITE-ProRule" id="PRU00175"/>
    </source>
</evidence>
<evidence type="ECO:0000255" key="4">
    <source>
        <dbReference type="PROSITE-ProRule" id="PRU00455"/>
    </source>
</evidence>
<evidence type="ECO:0000269" key="5">
    <source>
    </source>
</evidence>
<evidence type="ECO:0000269" key="6">
    <source>
    </source>
</evidence>
<evidence type="ECO:0000269" key="7">
    <source>
    </source>
</evidence>
<evidence type="ECO:0000269" key="8">
    <source>
    </source>
</evidence>
<evidence type="ECO:0000269" key="9">
    <source>
    </source>
</evidence>
<evidence type="ECO:0000303" key="10">
    <source>
    </source>
</evidence>
<evidence type="ECO:0000305" key="11"/>
<feature type="chain" id="PRO_0000056180" description="Putative E3 ubiquitin-protein ligase SINAT1">
    <location>
        <begin position="1"/>
        <end position="305"/>
    </location>
</feature>
<feature type="zinc finger region" description="RING-type" evidence="3">
    <location>
        <begin position="57"/>
        <end position="93"/>
    </location>
</feature>
<feature type="zinc finger region" description="SIAH-type" evidence="4">
    <location>
        <begin position="110"/>
        <end position="170"/>
    </location>
</feature>
<feature type="region of interest" description="SBD">
    <location>
        <begin position="107"/>
        <end position="300"/>
    </location>
</feature>
<feature type="binding site" evidence="1">
    <location>
        <position position="115"/>
    </location>
    <ligand>
        <name>Zn(2+)</name>
        <dbReference type="ChEBI" id="CHEBI:29105"/>
        <label>1</label>
    </ligand>
</feature>
<feature type="binding site" evidence="1">
    <location>
        <position position="122"/>
    </location>
    <ligand>
        <name>Zn(2+)</name>
        <dbReference type="ChEBI" id="CHEBI:29105"/>
        <label>1</label>
    </ligand>
</feature>
<feature type="binding site" evidence="1">
    <location>
        <position position="134"/>
    </location>
    <ligand>
        <name>Zn(2+)</name>
        <dbReference type="ChEBI" id="CHEBI:29105"/>
        <label>1</label>
    </ligand>
</feature>
<feature type="binding site" evidence="1">
    <location>
        <position position="138"/>
    </location>
    <ligand>
        <name>Zn(2+)</name>
        <dbReference type="ChEBI" id="CHEBI:29105"/>
        <label>1</label>
    </ligand>
</feature>
<feature type="binding site" evidence="1">
    <location>
        <position position="145"/>
    </location>
    <ligand>
        <name>Zn(2+)</name>
        <dbReference type="ChEBI" id="CHEBI:29105"/>
        <label>2</label>
    </ligand>
</feature>
<feature type="binding site" evidence="1">
    <location>
        <position position="152"/>
    </location>
    <ligand>
        <name>Zn(2+)</name>
        <dbReference type="ChEBI" id="CHEBI:29105"/>
        <label>2</label>
    </ligand>
</feature>
<feature type="binding site" evidence="1">
    <location>
        <position position="164"/>
    </location>
    <ligand>
        <name>Zn(2+)</name>
        <dbReference type="ChEBI" id="CHEBI:29105"/>
        <label>2</label>
    </ligand>
</feature>
<feature type="binding site" evidence="1">
    <location>
        <position position="169"/>
    </location>
    <ligand>
        <name>Zn(2+)</name>
        <dbReference type="ChEBI" id="CHEBI:29105"/>
        <label>2</label>
    </ligand>
</feature>
<feature type="mutagenesis site" description="Loss of ubiquitin ligase activity." evidence="9">
    <original>H</original>
    <variation>Y</variation>
    <location>
        <position position="75"/>
    </location>
</feature>